<proteinExistence type="inferred from homology"/>
<comment type="function">
    <text evidence="1">Catalyzes the phosphorylation of the 3'-hydroxyl group of dephosphocoenzyme A to form coenzyme A.</text>
</comment>
<comment type="catalytic activity">
    <reaction evidence="1">
        <text>3'-dephospho-CoA + ATP = ADP + CoA + H(+)</text>
        <dbReference type="Rhea" id="RHEA:18245"/>
        <dbReference type="ChEBI" id="CHEBI:15378"/>
        <dbReference type="ChEBI" id="CHEBI:30616"/>
        <dbReference type="ChEBI" id="CHEBI:57287"/>
        <dbReference type="ChEBI" id="CHEBI:57328"/>
        <dbReference type="ChEBI" id="CHEBI:456216"/>
        <dbReference type="EC" id="2.7.1.24"/>
    </reaction>
</comment>
<comment type="pathway">
    <text evidence="1">Cofactor biosynthesis; coenzyme A biosynthesis; CoA from (R)-pantothenate: step 5/5.</text>
</comment>
<comment type="subcellular location">
    <subcellularLocation>
        <location evidence="1">Cytoplasm</location>
    </subcellularLocation>
</comment>
<comment type="similarity">
    <text evidence="1 2">Belongs to the CoaE family.</text>
</comment>
<feature type="chain" id="PRO_0000172921" description="Dephospho-CoA kinase">
    <location>
        <begin position="1"/>
        <end position="203"/>
    </location>
</feature>
<feature type="domain" description="DPCK" evidence="1">
    <location>
        <begin position="3"/>
        <end position="201"/>
    </location>
</feature>
<feature type="binding site" evidence="1">
    <location>
        <begin position="11"/>
        <end position="16"/>
    </location>
    <ligand>
        <name>ATP</name>
        <dbReference type="ChEBI" id="CHEBI:30616"/>
    </ligand>
</feature>
<gene>
    <name evidence="1" type="primary">coaE</name>
    <name type="ordered locus">BPSL3011</name>
</gene>
<evidence type="ECO:0000255" key="1">
    <source>
        <dbReference type="HAMAP-Rule" id="MF_00376"/>
    </source>
</evidence>
<evidence type="ECO:0000305" key="2"/>
<protein>
    <recommendedName>
        <fullName evidence="1">Dephospho-CoA kinase</fullName>
        <ecNumber evidence="1">2.7.1.24</ecNumber>
    </recommendedName>
    <alternativeName>
        <fullName evidence="1">Dephosphocoenzyme A kinase</fullName>
    </alternativeName>
</protein>
<keyword id="KW-0067">ATP-binding</keyword>
<keyword id="KW-0173">Coenzyme A biosynthesis</keyword>
<keyword id="KW-0963">Cytoplasm</keyword>
<keyword id="KW-0418">Kinase</keyword>
<keyword id="KW-0547">Nucleotide-binding</keyword>
<keyword id="KW-1185">Reference proteome</keyword>
<keyword id="KW-0808">Transferase</keyword>
<sequence>MFSVGLTGGIGSGKTTVADLFGKLGATIVDTDLIAHRITAPQGLAMPLIAREFGAEFVAADGSLDRAKMRALVFSDESARKRLEAITHPLIREETEREARTAQGAYVVFVVPLLVESGTWKTRVDRVLVVDCDVETQIARVTARNGFTRAQVEAIVARQASRDARLAAADDVIANDNASVAELAAEVAALHQRYLECAAAARN</sequence>
<organism>
    <name type="scientific">Burkholderia pseudomallei (strain K96243)</name>
    <dbReference type="NCBI Taxonomy" id="272560"/>
    <lineage>
        <taxon>Bacteria</taxon>
        <taxon>Pseudomonadati</taxon>
        <taxon>Pseudomonadota</taxon>
        <taxon>Betaproteobacteria</taxon>
        <taxon>Burkholderiales</taxon>
        <taxon>Burkholderiaceae</taxon>
        <taxon>Burkholderia</taxon>
        <taxon>pseudomallei group</taxon>
    </lineage>
</organism>
<reference key="1">
    <citation type="journal article" date="2004" name="Proc. Natl. Acad. Sci. U.S.A.">
        <title>Genomic plasticity of the causative agent of melioidosis, Burkholderia pseudomallei.</title>
        <authorList>
            <person name="Holden M.T.G."/>
            <person name="Titball R.W."/>
            <person name="Peacock S.J."/>
            <person name="Cerdeno-Tarraga A.-M."/>
            <person name="Atkins T."/>
            <person name="Crossman L.C."/>
            <person name="Pitt T."/>
            <person name="Churcher C."/>
            <person name="Mungall K.L."/>
            <person name="Bentley S.D."/>
            <person name="Sebaihia M."/>
            <person name="Thomson N.R."/>
            <person name="Bason N."/>
            <person name="Beacham I.R."/>
            <person name="Brooks K."/>
            <person name="Brown K.A."/>
            <person name="Brown N.F."/>
            <person name="Challis G.L."/>
            <person name="Cherevach I."/>
            <person name="Chillingworth T."/>
            <person name="Cronin A."/>
            <person name="Crossett B."/>
            <person name="Davis P."/>
            <person name="DeShazer D."/>
            <person name="Feltwell T."/>
            <person name="Fraser A."/>
            <person name="Hance Z."/>
            <person name="Hauser H."/>
            <person name="Holroyd S."/>
            <person name="Jagels K."/>
            <person name="Keith K.E."/>
            <person name="Maddison M."/>
            <person name="Moule S."/>
            <person name="Price C."/>
            <person name="Quail M.A."/>
            <person name="Rabbinowitsch E."/>
            <person name="Rutherford K."/>
            <person name="Sanders M."/>
            <person name="Simmonds M."/>
            <person name="Songsivilai S."/>
            <person name="Stevens K."/>
            <person name="Tumapa S."/>
            <person name="Vesaratchavest M."/>
            <person name="Whitehead S."/>
            <person name="Yeats C."/>
            <person name="Barrell B.G."/>
            <person name="Oyston P.C.F."/>
            <person name="Parkhill J."/>
        </authorList>
    </citation>
    <scope>NUCLEOTIDE SEQUENCE [LARGE SCALE GENOMIC DNA]</scope>
    <source>
        <strain>K96243</strain>
    </source>
</reference>
<dbReference type="EC" id="2.7.1.24" evidence="1"/>
<dbReference type="EMBL" id="BX571965">
    <property type="protein sequence ID" value="CAH37022.1"/>
    <property type="molecule type" value="Genomic_DNA"/>
</dbReference>
<dbReference type="RefSeq" id="WP_004194322.1">
    <property type="nucleotide sequence ID" value="NZ_CP009538.1"/>
</dbReference>
<dbReference type="RefSeq" id="YP_109606.1">
    <property type="nucleotide sequence ID" value="NC_006350.1"/>
</dbReference>
<dbReference type="SMR" id="P0DMK3"/>
<dbReference type="STRING" id="272560.BPSL3011"/>
<dbReference type="GeneID" id="92980227"/>
<dbReference type="KEGG" id="bps:BPSL3011"/>
<dbReference type="PATRIC" id="fig|272560.51.peg.2258"/>
<dbReference type="eggNOG" id="COG0237">
    <property type="taxonomic scope" value="Bacteria"/>
</dbReference>
<dbReference type="UniPathway" id="UPA00241">
    <property type="reaction ID" value="UER00356"/>
</dbReference>
<dbReference type="Proteomes" id="UP000000605">
    <property type="component" value="Chromosome 1"/>
</dbReference>
<dbReference type="GO" id="GO:0005737">
    <property type="term" value="C:cytoplasm"/>
    <property type="evidence" value="ECO:0007669"/>
    <property type="project" value="UniProtKB-SubCell"/>
</dbReference>
<dbReference type="GO" id="GO:0005524">
    <property type="term" value="F:ATP binding"/>
    <property type="evidence" value="ECO:0007669"/>
    <property type="project" value="UniProtKB-UniRule"/>
</dbReference>
<dbReference type="GO" id="GO:0004140">
    <property type="term" value="F:dephospho-CoA kinase activity"/>
    <property type="evidence" value="ECO:0007669"/>
    <property type="project" value="UniProtKB-UniRule"/>
</dbReference>
<dbReference type="GO" id="GO:0015937">
    <property type="term" value="P:coenzyme A biosynthetic process"/>
    <property type="evidence" value="ECO:0007669"/>
    <property type="project" value="UniProtKB-UniRule"/>
</dbReference>
<dbReference type="CDD" id="cd02022">
    <property type="entry name" value="DPCK"/>
    <property type="match status" value="1"/>
</dbReference>
<dbReference type="Gene3D" id="3.40.50.300">
    <property type="entry name" value="P-loop containing nucleotide triphosphate hydrolases"/>
    <property type="match status" value="1"/>
</dbReference>
<dbReference type="HAMAP" id="MF_00376">
    <property type="entry name" value="Dephospho_CoA_kinase"/>
    <property type="match status" value="1"/>
</dbReference>
<dbReference type="InterPro" id="IPR001977">
    <property type="entry name" value="Depp_CoAkinase"/>
</dbReference>
<dbReference type="InterPro" id="IPR027417">
    <property type="entry name" value="P-loop_NTPase"/>
</dbReference>
<dbReference type="NCBIfam" id="TIGR00152">
    <property type="entry name" value="dephospho-CoA kinase"/>
    <property type="match status" value="1"/>
</dbReference>
<dbReference type="PANTHER" id="PTHR10695:SF46">
    <property type="entry name" value="BIFUNCTIONAL COENZYME A SYNTHASE-RELATED"/>
    <property type="match status" value="1"/>
</dbReference>
<dbReference type="PANTHER" id="PTHR10695">
    <property type="entry name" value="DEPHOSPHO-COA KINASE-RELATED"/>
    <property type="match status" value="1"/>
</dbReference>
<dbReference type="Pfam" id="PF01121">
    <property type="entry name" value="CoaE"/>
    <property type="match status" value="1"/>
</dbReference>
<dbReference type="SUPFAM" id="SSF52540">
    <property type="entry name" value="P-loop containing nucleoside triphosphate hydrolases"/>
    <property type="match status" value="1"/>
</dbReference>
<dbReference type="PROSITE" id="PS51219">
    <property type="entry name" value="DPCK"/>
    <property type="match status" value="1"/>
</dbReference>
<accession>P0DMK3</accession>
<accession>Q63QL2</accession>
<accession>Q9ZF69</accession>
<name>COAE_BURPS</name>